<reference key="1">
    <citation type="journal article" date="2002" name="Proc. Natl. Acad. Sci. U.S.A.">
        <title>The complete genome sequence of Chlorobium tepidum TLS, a photosynthetic, anaerobic, green-sulfur bacterium.</title>
        <authorList>
            <person name="Eisen J.A."/>
            <person name="Nelson K.E."/>
            <person name="Paulsen I.T."/>
            <person name="Heidelberg J.F."/>
            <person name="Wu M."/>
            <person name="Dodson R.J."/>
            <person name="DeBoy R.T."/>
            <person name="Gwinn M.L."/>
            <person name="Nelson W.C."/>
            <person name="Haft D.H."/>
            <person name="Hickey E.K."/>
            <person name="Peterson J.D."/>
            <person name="Durkin A.S."/>
            <person name="Kolonay J.F."/>
            <person name="Yang F."/>
            <person name="Holt I.E."/>
            <person name="Umayam L.A."/>
            <person name="Mason T.M."/>
            <person name="Brenner M."/>
            <person name="Shea T.P."/>
            <person name="Parksey D.S."/>
            <person name="Nierman W.C."/>
            <person name="Feldblyum T.V."/>
            <person name="Hansen C.L."/>
            <person name="Craven M.B."/>
            <person name="Radune D."/>
            <person name="Vamathevan J.J."/>
            <person name="Khouri H.M."/>
            <person name="White O."/>
            <person name="Gruber T.M."/>
            <person name="Ketchum K.A."/>
            <person name="Venter J.C."/>
            <person name="Tettelin H."/>
            <person name="Bryant D.A."/>
            <person name="Fraser C.M."/>
        </authorList>
    </citation>
    <scope>NUCLEOTIDE SEQUENCE [LARGE SCALE GENOMIC DNA]</scope>
    <source>
        <strain>ATCC 49652 / DSM 12025 / NBRC 103806 / TLS</strain>
    </source>
</reference>
<comment type="function">
    <text evidence="1">Endonuclease IV plays a role in DNA repair. It cleaves phosphodiester bonds at apurinic or apyrimidinic (AP) sites, generating a 3'-hydroxyl group and a 5'-terminal sugar phosphate.</text>
</comment>
<comment type="catalytic activity">
    <reaction evidence="1">
        <text>Endonucleolytic cleavage to 5'-phosphooligonucleotide end-products.</text>
        <dbReference type="EC" id="3.1.21.2"/>
    </reaction>
</comment>
<comment type="cofactor">
    <cofactor evidence="1">
        <name>Zn(2+)</name>
        <dbReference type="ChEBI" id="CHEBI:29105"/>
    </cofactor>
    <text evidence="1">Binds 3 Zn(2+) ions.</text>
</comment>
<comment type="similarity">
    <text evidence="1">Belongs to the AP endonuclease 2 family.</text>
</comment>
<gene>
    <name evidence="1" type="primary">nfo</name>
    <name type="ordered locus">CT0316</name>
</gene>
<feature type="chain" id="PRO_0000190834" description="Probable endonuclease 4">
    <location>
        <begin position="1"/>
        <end position="281"/>
    </location>
</feature>
<feature type="binding site" evidence="1">
    <location>
        <position position="69"/>
    </location>
    <ligand>
        <name>Zn(2+)</name>
        <dbReference type="ChEBI" id="CHEBI:29105"/>
        <label>1</label>
    </ligand>
</feature>
<feature type="binding site" evidence="1">
    <location>
        <position position="109"/>
    </location>
    <ligand>
        <name>Zn(2+)</name>
        <dbReference type="ChEBI" id="CHEBI:29105"/>
        <label>1</label>
    </ligand>
</feature>
<feature type="binding site" evidence="1">
    <location>
        <position position="145"/>
    </location>
    <ligand>
        <name>Zn(2+)</name>
        <dbReference type="ChEBI" id="CHEBI:29105"/>
        <label>1</label>
    </ligand>
</feature>
<feature type="binding site" evidence="1">
    <location>
        <position position="145"/>
    </location>
    <ligand>
        <name>Zn(2+)</name>
        <dbReference type="ChEBI" id="CHEBI:29105"/>
        <label>2</label>
    </ligand>
</feature>
<feature type="binding site" evidence="1">
    <location>
        <position position="179"/>
    </location>
    <ligand>
        <name>Zn(2+)</name>
        <dbReference type="ChEBI" id="CHEBI:29105"/>
        <label>2</label>
    </ligand>
</feature>
<feature type="binding site" evidence="1">
    <location>
        <position position="182"/>
    </location>
    <ligand>
        <name>Zn(2+)</name>
        <dbReference type="ChEBI" id="CHEBI:29105"/>
        <label>3</label>
    </ligand>
</feature>
<feature type="binding site" evidence="1">
    <location>
        <position position="216"/>
    </location>
    <ligand>
        <name>Zn(2+)</name>
        <dbReference type="ChEBI" id="CHEBI:29105"/>
        <label>2</label>
    </ligand>
</feature>
<feature type="binding site" evidence="1">
    <location>
        <position position="229"/>
    </location>
    <ligand>
        <name>Zn(2+)</name>
        <dbReference type="ChEBI" id="CHEBI:29105"/>
        <label>3</label>
    </ligand>
</feature>
<feature type="binding site" evidence="1">
    <location>
        <position position="231"/>
    </location>
    <ligand>
        <name>Zn(2+)</name>
        <dbReference type="ChEBI" id="CHEBI:29105"/>
        <label>3</label>
    </ligand>
</feature>
<feature type="binding site" evidence="1">
    <location>
        <position position="261"/>
    </location>
    <ligand>
        <name>Zn(2+)</name>
        <dbReference type="ChEBI" id="CHEBI:29105"/>
        <label>2</label>
    </ligand>
</feature>
<accession>Q8KFL0</accession>
<protein>
    <recommendedName>
        <fullName evidence="1">Probable endonuclease 4</fullName>
        <ecNumber evidence="1">3.1.21.2</ecNumber>
    </recommendedName>
    <alternativeName>
        <fullName evidence="1">Endodeoxyribonuclease IV</fullName>
    </alternativeName>
    <alternativeName>
        <fullName evidence="1">Endonuclease IV</fullName>
    </alternativeName>
</protein>
<evidence type="ECO:0000255" key="1">
    <source>
        <dbReference type="HAMAP-Rule" id="MF_00152"/>
    </source>
</evidence>
<proteinExistence type="inferred from homology"/>
<dbReference type="EC" id="3.1.21.2" evidence="1"/>
<dbReference type="EMBL" id="AE006470">
    <property type="protein sequence ID" value="AAM71562.1"/>
    <property type="molecule type" value="Genomic_DNA"/>
</dbReference>
<dbReference type="RefSeq" id="NP_661220.1">
    <property type="nucleotide sequence ID" value="NC_002932.3"/>
</dbReference>
<dbReference type="RefSeq" id="WP_010932008.1">
    <property type="nucleotide sequence ID" value="NC_002932.3"/>
</dbReference>
<dbReference type="SMR" id="Q8KFL0"/>
<dbReference type="STRING" id="194439.CT0316"/>
<dbReference type="EnsemblBacteria" id="AAM71562">
    <property type="protein sequence ID" value="AAM71562"/>
    <property type="gene ID" value="CT0316"/>
</dbReference>
<dbReference type="KEGG" id="cte:CT0316"/>
<dbReference type="PATRIC" id="fig|194439.7.peg.306"/>
<dbReference type="eggNOG" id="COG0648">
    <property type="taxonomic scope" value="Bacteria"/>
</dbReference>
<dbReference type="HOGENOM" id="CLU_025885_0_4_10"/>
<dbReference type="OrthoDB" id="9805666at2"/>
<dbReference type="Proteomes" id="UP000001007">
    <property type="component" value="Chromosome"/>
</dbReference>
<dbReference type="GO" id="GO:0008833">
    <property type="term" value="F:deoxyribonuclease IV (phage-T4-induced) activity"/>
    <property type="evidence" value="ECO:0007669"/>
    <property type="project" value="UniProtKB-UniRule"/>
</dbReference>
<dbReference type="GO" id="GO:0003677">
    <property type="term" value="F:DNA binding"/>
    <property type="evidence" value="ECO:0007669"/>
    <property type="project" value="InterPro"/>
</dbReference>
<dbReference type="GO" id="GO:0003906">
    <property type="term" value="F:DNA-(apurinic or apyrimidinic site) endonuclease activity"/>
    <property type="evidence" value="ECO:0007669"/>
    <property type="project" value="TreeGrafter"/>
</dbReference>
<dbReference type="GO" id="GO:0008081">
    <property type="term" value="F:phosphoric diester hydrolase activity"/>
    <property type="evidence" value="ECO:0007669"/>
    <property type="project" value="TreeGrafter"/>
</dbReference>
<dbReference type="GO" id="GO:0008270">
    <property type="term" value="F:zinc ion binding"/>
    <property type="evidence" value="ECO:0007669"/>
    <property type="project" value="UniProtKB-UniRule"/>
</dbReference>
<dbReference type="GO" id="GO:0006284">
    <property type="term" value="P:base-excision repair"/>
    <property type="evidence" value="ECO:0007669"/>
    <property type="project" value="TreeGrafter"/>
</dbReference>
<dbReference type="CDD" id="cd00019">
    <property type="entry name" value="AP2Ec"/>
    <property type="match status" value="1"/>
</dbReference>
<dbReference type="FunFam" id="3.20.20.150:FF:000001">
    <property type="entry name" value="Probable endonuclease 4"/>
    <property type="match status" value="1"/>
</dbReference>
<dbReference type="Gene3D" id="3.20.20.150">
    <property type="entry name" value="Divalent-metal-dependent TIM barrel enzymes"/>
    <property type="match status" value="1"/>
</dbReference>
<dbReference type="HAMAP" id="MF_00152">
    <property type="entry name" value="Nfo"/>
    <property type="match status" value="1"/>
</dbReference>
<dbReference type="InterPro" id="IPR001719">
    <property type="entry name" value="AP_endonuc_2"/>
</dbReference>
<dbReference type="InterPro" id="IPR018246">
    <property type="entry name" value="AP_endonuc_F2_Zn_BS"/>
</dbReference>
<dbReference type="InterPro" id="IPR036237">
    <property type="entry name" value="Xyl_isomerase-like_sf"/>
</dbReference>
<dbReference type="InterPro" id="IPR013022">
    <property type="entry name" value="Xyl_isomerase-like_TIM-brl"/>
</dbReference>
<dbReference type="NCBIfam" id="TIGR00587">
    <property type="entry name" value="nfo"/>
    <property type="match status" value="1"/>
</dbReference>
<dbReference type="NCBIfam" id="NF002199">
    <property type="entry name" value="PRK01060.1-4"/>
    <property type="match status" value="1"/>
</dbReference>
<dbReference type="PANTHER" id="PTHR21445:SF0">
    <property type="entry name" value="APURINIC-APYRIMIDINIC ENDONUCLEASE"/>
    <property type="match status" value="1"/>
</dbReference>
<dbReference type="PANTHER" id="PTHR21445">
    <property type="entry name" value="ENDONUCLEASE IV ENDODEOXYRIBONUCLEASE IV"/>
    <property type="match status" value="1"/>
</dbReference>
<dbReference type="Pfam" id="PF01261">
    <property type="entry name" value="AP_endonuc_2"/>
    <property type="match status" value="1"/>
</dbReference>
<dbReference type="SMART" id="SM00518">
    <property type="entry name" value="AP2Ec"/>
    <property type="match status" value="1"/>
</dbReference>
<dbReference type="SUPFAM" id="SSF51658">
    <property type="entry name" value="Xylose isomerase-like"/>
    <property type="match status" value="1"/>
</dbReference>
<dbReference type="PROSITE" id="PS00729">
    <property type="entry name" value="AP_NUCLEASE_F2_1"/>
    <property type="match status" value="1"/>
</dbReference>
<dbReference type="PROSITE" id="PS00730">
    <property type="entry name" value="AP_NUCLEASE_F2_2"/>
    <property type="match status" value="1"/>
</dbReference>
<dbReference type="PROSITE" id="PS00731">
    <property type="entry name" value="AP_NUCLEASE_F2_3"/>
    <property type="match status" value="1"/>
</dbReference>
<dbReference type="PROSITE" id="PS51432">
    <property type="entry name" value="AP_NUCLEASE_F2_4"/>
    <property type="match status" value="1"/>
</dbReference>
<organism>
    <name type="scientific">Chlorobaculum tepidum (strain ATCC 49652 / DSM 12025 / NBRC 103806 / TLS)</name>
    <name type="common">Chlorobium tepidum</name>
    <dbReference type="NCBI Taxonomy" id="194439"/>
    <lineage>
        <taxon>Bacteria</taxon>
        <taxon>Pseudomonadati</taxon>
        <taxon>Chlorobiota</taxon>
        <taxon>Chlorobiia</taxon>
        <taxon>Chlorobiales</taxon>
        <taxon>Chlorobiaceae</taxon>
        <taxon>Chlorobaculum</taxon>
    </lineage>
</organism>
<keyword id="KW-0227">DNA damage</keyword>
<keyword id="KW-0234">DNA repair</keyword>
<keyword id="KW-0255">Endonuclease</keyword>
<keyword id="KW-0378">Hydrolase</keyword>
<keyword id="KW-0479">Metal-binding</keyword>
<keyword id="KW-0540">Nuclease</keyword>
<keyword id="KW-1185">Reference proteome</keyword>
<keyword id="KW-0862">Zinc</keyword>
<name>END4_CHLTE</name>
<sequence length="281" mass="30931">MKRVGAHVSIAGGVENAPLNAQKIGAKAFAMFTRNQRQWHSAPLTAASIEAFRRNCDEAGFLPEHILPHDSYLINLGAPEADKIEKSRKAFVTEMQRAEALGLTMLNFHPGSHLNLTDEDACLKTIAESVNRSLDATAGVTAVIENTAGQGSNLGWRFEHLARIIELVEDKSRVGVCLDTCHLFASGYDLRTPEAFDATLREFDRVVGLLYLKGMHLNDAKQKLGSKVDRHECLGKGMIGIDAFAHIMRHPALEEIPLILETPNAEGWAEEIAMLYGFTNE</sequence>